<comment type="function">
    <text evidence="1">Catalyzes the condensation of the acetyl group of acetyl-CoA with 3-methyl-2-oxobutanoate (2-ketoisovalerate) to form 3-carboxy-3-hydroxy-4-methylpentanoate (2-isopropylmalate).</text>
</comment>
<comment type="catalytic activity">
    <reaction evidence="1">
        <text>3-methyl-2-oxobutanoate + acetyl-CoA + H2O = (2S)-2-isopropylmalate + CoA + H(+)</text>
        <dbReference type="Rhea" id="RHEA:21524"/>
        <dbReference type="ChEBI" id="CHEBI:1178"/>
        <dbReference type="ChEBI" id="CHEBI:11851"/>
        <dbReference type="ChEBI" id="CHEBI:15377"/>
        <dbReference type="ChEBI" id="CHEBI:15378"/>
        <dbReference type="ChEBI" id="CHEBI:57287"/>
        <dbReference type="ChEBI" id="CHEBI:57288"/>
        <dbReference type="EC" id="2.3.3.13"/>
    </reaction>
</comment>
<comment type="cofactor">
    <cofactor evidence="1">
        <name>Mn(2+)</name>
        <dbReference type="ChEBI" id="CHEBI:29035"/>
    </cofactor>
</comment>
<comment type="pathway">
    <text evidence="1">Amino-acid biosynthesis; L-leucine biosynthesis; L-leucine from 3-methyl-2-oxobutanoate: step 1/4.</text>
</comment>
<comment type="subunit">
    <text evidence="1">Homodimer.</text>
</comment>
<comment type="subcellular location">
    <subcellularLocation>
        <location evidence="1">Cytoplasm</location>
    </subcellularLocation>
</comment>
<comment type="similarity">
    <text evidence="1">Belongs to the alpha-IPM synthase/homocitrate synthase family. LeuA type 1 subfamily.</text>
</comment>
<dbReference type="EC" id="2.3.3.13" evidence="1"/>
<dbReference type="EMBL" id="CP000253">
    <property type="protein sequence ID" value="ABD31323.1"/>
    <property type="molecule type" value="Genomic_DNA"/>
</dbReference>
<dbReference type="RefSeq" id="WP_000094576.1">
    <property type="nucleotide sequence ID" value="NZ_LS483365.1"/>
</dbReference>
<dbReference type="RefSeq" id="YP_500767.1">
    <property type="nucleotide sequence ID" value="NC_007795.1"/>
</dbReference>
<dbReference type="SMR" id="Q2FWK3"/>
<dbReference type="STRING" id="93061.SAOUHSC_02285"/>
<dbReference type="PaxDb" id="1280-SAXN108_2300"/>
<dbReference type="GeneID" id="3919160"/>
<dbReference type="KEGG" id="sao:SAOUHSC_02285"/>
<dbReference type="PATRIC" id="fig|93061.5.peg.2075"/>
<dbReference type="eggNOG" id="COG0119">
    <property type="taxonomic scope" value="Bacteria"/>
</dbReference>
<dbReference type="HOGENOM" id="CLU_022158_0_1_9"/>
<dbReference type="OrthoDB" id="9804858at2"/>
<dbReference type="UniPathway" id="UPA00048">
    <property type="reaction ID" value="UER00070"/>
</dbReference>
<dbReference type="PRO" id="PR:Q2FWK3"/>
<dbReference type="Proteomes" id="UP000008816">
    <property type="component" value="Chromosome"/>
</dbReference>
<dbReference type="GO" id="GO:0005737">
    <property type="term" value="C:cytoplasm"/>
    <property type="evidence" value="ECO:0007669"/>
    <property type="project" value="UniProtKB-SubCell"/>
</dbReference>
<dbReference type="GO" id="GO:0003852">
    <property type="term" value="F:2-isopropylmalate synthase activity"/>
    <property type="evidence" value="ECO:0000318"/>
    <property type="project" value="GO_Central"/>
</dbReference>
<dbReference type="GO" id="GO:0003985">
    <property type="term" value="F:acetyl-CoA C-acetyltransferase activity"/>
    <property type="evidence" value="ECO:0007669"/>
    <property type="project" value="UniProtKB-UniRule"/>
</dbReference>
<dbReference type="GO" id="GO:0030145">
    <property type="term" value="F:manganese ion binding"/>
    <property type="evidence" value="ECO:0007669"/>
    <property type="project" value="UniProtKB-UniRule"/>
</dbReference>
<dbReference type="GO" id="GO:0009098">
    <property type="term" value="P:L-leucine biosynthetic process"/>
    <property type="evidence" value="ECO:0000318"/>
    <property type="project" value="GO_Central"/>
</dbReference>
<dbReference type="CDD" id="cd07940">
    <property type="entry name" value="DRE_TIM_IPMS"/>
    <property type="match status" value="1"/>
</dbReference>
<dbReference type="FunFam" id="1.10.238.260:FF:000001">
    <property type="entry name" value="2-isopropylmalate synthase"/>
    <property type="match status" value="1"/>
</dbReference>
<dbReference type="FunFam" id="3.20.20.70:FF:000010">
    <property type="entry name" value="2-isopropylmalate synthase"/>
    <property type="match status" value="1"/>
</dbReference>
<dbReference type="FunFam" id="3.30.160.270:FF:000003">
    <property type="entry name" value="2-isopropylmalate synthase"/>
    <property type="match status" value="1"/>
</dbReference>
<dbReference type="Gene3D" id="1.10.238.260">
    <property type="match status" value="1"/>
</dbReference>
<dbReference type="Gene3D" id="3.30.160.270">
    <property type="match status" value="1"/>
</dbReference>
<dbReference type="Gene3D" id="3.20.20.70">
    <property type="entry name" value="Aldolase class I"/>
    <property type="match status" value="1"/>
</dbReference>
<dbReference type="HAMAP" id="MF_01025">
    <property type="entry name" value="LeuA_type1"/>
    <property type="match status" value="1"/>
</dbReference>
<dbReference type="InterPro" id="IPR050073">
    <property type="entry name" value="2-IPM_HCS-like"/>
</dbReference>
<dbReference type="InterPro" id="IPR013709">
    <property type="entry name" value="2-isopropylmalate_synth_dimer"/>
</dbReference>
<dbReference type="InterPro" id="IPR013785">
    <property type="entry name" value="Aldolase_TIM"/>
</dbReference>
<dbReference type="InterPro" id="IPR054691">
    <property type="entry name" value="LeuA/HCS_post-cat"/>
</dbReference>
<dbReference type="InterPro" id="IPR036230">
    <property type="entry name" value="LeuA_allosteric_dom_sf"/>
</dbReference>
<dbReference type="InterPro" id="IPR005671">
    <property type="entry name" value="LeuA_bact_synth"/>
</dbReference>
<dbReference type="InterPro" id="IPR000891">
    <property type="entry name" value="PYR_CT"/>
</dbReference>
<dbReference type="NCBIfam" id="TIGR00973">
    <property type="entry name" value="leuA_bact"/>
    <property type="match status" value="1"/>
</dbReference>
<dbReference type="NCBIfam" id="NF002086">
    <property type="entry name" value="PRK00915.1-3"/>
    <property type="match status" value="1"/>
</dbReference>
<dbReference type="NCBIfam" id="NF002088">
    <property type="entry name" value="PRK00915.1-5"/>
    <property type="match status" value="1"/>
</dbReference>
<dbReference type="PANTHER" id="PTHR10277:SF9">
    <property type="entry name" value="2-ISOPROPYLMALATE SYNTHASE 1, CHLOROPLASTIC-RELATED"/>
    <property type="match status" value="1"/>
</dbReference>
<dbReference type="PANTHER" id="PTHR10277">
    <property type="entry name" value="HOMOCITRATE SYNTHASE-RELATED"/>
    <property type="match status" value="1"/>
</dbReference>
<dbReference type="Pfam" id="PF22617">
    <property type="entry name" value="HCS_D2"/>
    <property type="match status" value="1"/>
</dbReference>
<dbReference type="Pfam" id="PF00682">
    <property type="entry name" value="HMGL-like"/>
    <property type="match status" value="1"/>
</dbReference>
<dbReference type="Pfam" id="PF08502">
    <property type="entry name" value="LeuA_dimer"/>
    <property type="match status" value="1"/>
</dbReference>
<dbReference type="SMART" id="SM00917">
    <property type="entry name" value="LeuA_dimer"/>
    <property type="match status" value="1"/>
</dbReference>
<dbReference type="SUPFAM" id="SSF110921">
    <property type="entry name" value="2-isopropylmalate synthase LeuA, allosteric (dimerisation) domain"/>
    <property type="match status" value="1"/>
</dbReference>
<dbReference type="SUPFAM" id="SSF51569">
    <property type="entry name" value="Aldolase"/>
    <property type="match status" value="1"/>
</dbReference>
<dbReference type="PROSITE" id="PS50991">
    <property type="entry name" value="PYR_CT"/>
    <property type="match status" value="1"/>
</dbReference>
<accession>Q2FWK3</accession>
<reference key="1">
    <citation type="book" date="2006" name="Gram positive pathogens, 2nd edition">
        <title>The Staphylococcus aureus NCTC 8325 genome.</title>
        <editorList>
            <person name="Fischetti V."/>
            <person name="Novick R."/>
            <person name="Ferretti J."/>
            <person name="Portnoy D."/>
            <person name="Rood J."/>
        </editorList>
        <authorList>
            <person name="Gillaspy A.F."/>
            <person name="Worrell V."/>
            <person name="Orvis J."/>
            <person name="Roe B.A."/>
            <person name="Dyer D.W."/>
            <person name="Iandolo J.J."/>
        </authorList>
    </citation>
    <scope>NUCLEOTIDE SEQUENCE [LARGE SCALE GENOMIC DNA]</scope>
    <source>
        <strain>NCTC 8325 / PS 47</strain>
    </source>
</reference>
<sequence length="509" mass="55675">MSSHIQIFDTTLRDGEQTPGVNFTFDERLRIALQLEKWGVDVIEAGFPASSTGSFKSVQAIAQTLTTTAVCGLARCKKSDIDAVYEATKDAAKPVVHVFIATSPIHLEHKLKMSQEDVLASIKEHVTYAKQLFDVVQFSPEDATRTELPFLVKCVQTAVDAGATVINIPDTVGYSYHDEYAHIFKTLTESVTSSNEIIYSAHCHDDLGMAVSNSLAAIEGGARRIEGTVNGIGERAGNAALEEVALALYVRNDHYGAQTALNLEETKKTSDLISRYAGIRVPRNKAIVGQNAFSHESGIHQDGVLKHRETYEIMTPQLVGVSTTELPLGKLSGKHAFSEKLKALGYDIDKEAQIDLFKQFKAIADKKKSVSDRDIHAIIQGSEHEHQALYKLETLQLQYVSSGLQSAVVVVKDKEGHIYQDSSIGTGSIVAIYNAVDRIFQKETELIDYRINSVTEGTDAQAEVHVNLLIEGKTVNGFGIDHDILQASCKAYVEAHAKFAAENVEKVGN</sequence>
<proteinExistence type="inferred from homology"/>
<feature type="chain" id="PRO_1000149304" description="2-isopropylmalate synthase">
    <location>
        <begin position="1"/>
        <end position="509"/>
    </location>
</feature>
<feature type="domain" description="Pyruvate carboxyltransferase" evidence="1">
    <location>
        <begin position="5"/>
        <end position="267"/>
    </location>
</feature>
<feature type="region of interest" description="Regulatory domain" evidence="1">
    <location>
        <begin position="391"/>
        <end position="509"/>
    </location>
</feature>
<feature type="binding site" evidence="1">
    <location>
        <position position="14"/>
    </location>
    <ligand>
        <name>Mn(2+)</name>
        <dbReference type="ChEBI" id="CHEBI:29035"/>
    </ligand>
</feature>
<feature type="binding site" evidence="1">
    <location>
        <position position="202"/>
    </location>
    <ligand>
        <name>Mn(2+)</name>
        <dbReference type="ChEBI" id="CHEBI:29035"/>
    </ligand>
</feature>
<feature type="binding site" evidence="1">
    <location>
        <position position="204"/>
    </location>
    <ligand>
        <name>Mn(2+)</name>
        <dbReference type="ChEBI" id="CHEBI:29035"/>
    </ligand>
</feature>
<feature type="binding site" evidence="1">
    <location>
        <position position="238"/>
    </location>
    <ligand>
        <name>Mn(2+)</name>
        <dbReference type="ChEBI" id="CHEBI:29035"/>
    </ligand>
</feature>
<evidence type="ECO:0000255" key="1">
    <source>
        <dbReference type="HAMAP-Rule" id="MF_01025"/>
    </source>
</evidence>
<gene>
    <name evidence="1" type="primary">leuA</name>
    <name type="ordered locus">SAOUHSC_02285</name>
</gene>
<name>LEU1_STAA8</name>
<keyword id="KW-0028">Amino-acid biosynthesis</keyword>
<keyword id="KW-0100">Branched-chain amino acid biosynthesis</keyword>
<keyword id="KW-0963">Cytoplasm</keyword>
<keyword id="KW-0432">Leucine biosynthesis</keyword>
<keyword id="KW-0464">Manganese</keyword>
<keyword id="KW-0479">Metal-binding</keyword>
<keyword id="KW-1185">Reference proteome</keyword>
<keyword id="KW-0808">Transferase</keyword>
<protein>
    <recommendedName>
        <fullName evidence="1">2-isopropylmalate synthase</fullName>
        <ecNumber evidence="1">2.3.3.13</ecNumber>
    </recommendedName>
    <alternativeName>
        <fullName evidence="1">Alpha-IPM synthase</fullName>
    </alternativeName>
    <alternativeName>
        <fullName evidence="1">Alpha-isopropylmalate synthase</fullName>
    </alternativeName>
</protein>
<organism>
    <name type="scientific">Staphylococcus aureus (strain NCTC 8325 / PS 47)</name>
    <dbReference type="NCBI Taxonomy" id="93061"/>
    <lineage>
        <taxon>Bacteria</taxon>
        <taxon>Bacillati</taxon>
        <taxon>Bacillota</taxon>
        <taxon>Bacilli</taxon>
        <taxon>Bacillales</taxon>
        <taxon>Staphylococcaceae</taxon>
        <taxon>Staphylococcus</taxon>
    </lineage>
</organism>